<evidence type="ECO:0000250" key="1">
    <source>
        <dbReference type="UniProtKB" id="Q1RNF8"/>
    </source>
</evidence>
<evidence type="ECO:0000255" key="2">
    <source>
        <dbReference type="PROSITE-ProRule" id="PRU00184"/>
    </source>
</evidence>
<evidence type="ECO:0000256" key="3">
    <source>
        <dbReference type="SAM" id="MobiDB-lite"/>
    </source>
</evidence>
<evidence type="ECO:0000269" key="4">
    <source>
    </source>
</evidence>
<evidence type="ECO:0000303" key="5">
    <source>
    </source>
</evidence>
<evidence type="ECO:0000303" key="6">
    <source>
    </source>
</evidence>
<evidence type="ECO:0000303" key="7">
    <source>
    </source>
</evidence>
<evidence type="ECO:0000305" key="8"/>
<evidence type="ECO:0007744" key="9">
    <source>
    </source>
</evidence>
<evidence type="ECO:0007744" key="10">
    <source>
    </source>
</evidence>
<feature type="chain" id="PRO_0000279500" description="Sterile alpha motif domain-containing protein 11">
    <location>
        <begin position="1"/>
        <end position="681"/>
    </location>
</feature>
<feature type="domain" description="SAM" evidence="2">
    <location>
        <begin position="543"/>
        <end position="608"/>
    </location>
</feature>
<feature type="region of interest" description="Disordered" evidence="3">
    <location>
        <begin position="41"/>
        <end position="77"/>
    </location>
</feature>
<feature type="region of interest" description="Disordered" evidence="3">
    <location>
        <begin position="212"/>
        <end position="234"/>
    </location>
</feature>
<feature type="region of interest" description="Disordered" evidence="3">
    <location>
        <begin position="251"/>
        <end position="307"/>
    </location>
</feature>
<feature type="region of interest" description="Disordered" evidence="3">
    <location>
        <begin position="407"/>
        <end position="498"/>
    </location>
</feature>
<feature type="region of interest" description="Disordered" evidence="3">
    <location>
        <begin position="625"/>
        <end position="681"/>
    </location>
</feature>
<feature type="compositionally biased region" description="Basic and acidic residues" evidence="3">
    <location>
        <begin position="219"/>
        <end position="234"/>
    </location>
</feature>
<feature type="compositionally biased region" description="Pro residues" evidence="3">
    <location>
        <begin position="412"/>
        <end position="423"/>
    </location>
</feature>
<feature type="compositionally biased region" description="Polar residues" evidence="3">
    <location>
        <begin position="637"/>
        <end position="646"/>
    </location>
</feature>
<feature type="compositionally biased region" description="Polar residues" evidence="3">
    <location>
        <begin position="656"/>
        <end position="665"/>
    </location>
</feature>
<feature type="modified residue" description="Phosphothreonine" evidence="9">
    <location>
        <position position="485"/>
    </location>
</feature>
<feature type="modified residue" description="Phosphoserine" evidence="9">
    <location>
        <position position="640"/>
    </location>
</feature>
<feature type="cross-link" description="Glycyl lysine isopeptide (Lys-Gly) (interchain with G-Cter in SUMO2)" evidence="10">
    <location>
        <position position="72"/>
    </location>
</feature>
<feature type="splice variant" id="VSP_053647" description="In isoform 1 and isoform 2." evidence="5 6">
    <location>
        <begin position="1"/>
        <end position="185"/>
    </location>
</feature>
<feature type="splice variant" id="VSP_053648" description="In isoform 4 and isoform 5." evidence="7">
    <original>Q</original>
    <variation>QA</variation>
    <location>
        <position position="173"/>
    </location>
</feature>
<feature type="splice variant" id="VSP_053649" description="In isoform 1, isoform 4, isoform 5 and isoform 6." evidence="6 7">
    <location>
        <begin position="220"/>
        <end position="235"/>
    </location>
</feature>
<feature type="splice variant" id="VSP_053650" description="In isoform 2 and isoform 5." evidence="5 6 7">
    <original>V</original>
    <variation>VRRWGVRSGSPDHSWAESSGWVCDSPHQAISLQV</variation>
    <location>
        <position position="601"/>
    </location>
</feature>
<feature type="sequence variant" id="VAR_088899" description="In RP; uncertain significance; dbSNP:rs903331232." evidence="4">
    <original>K</original>
    <variation>E</variation>
    <location>
        <position position="45"/>
    </location>
</feature>
<feature type="sequence variant" id="VAR_088900" description="In RP; likely pathogenic." evidence="4">
    <location>
        <begin position="168"/>
        <end position="681"/>
    </location>
</feature>
<feature type="sequence variant" id="VAR_088901" description="In RP; likely pathogenic." evidence="4">
    <location>
        <begin position="630"/>
        <end position="681"/>
    </location>
</feature>
<feature type="sequence conflict" description="In Ref. 4; AAH24295." evidence="8" ref="4">
    <original>C</original>
    <variation>L</variation>
    <location>
        <position position="129"/>
    </location>
</feature>
<feature type="sequence conflict" description="In Ref. 1; AFP36417." evidence="8" ref="1">
    <original>F</original>
    <variation>L</variation>
    <location>
        <position position="162"/>
    </location>
</feature>
<feature type="sequence conflict" description="In Ref. 1; AFP36417/AFP36421/AFP36422, 2; BAB70781 and 4; AAH24295/AAH33213." evidence="8" ref="1 2 4">
    <original>W</original>
    <variation>R</variation>
    <location>
        <position position="343"/>
    </location>
</feature>
<proteinExistence type="evidence at protein level"/>
<protein>
    <recommendedName>
        <fullName>Sterile alpha motif domain-containing protein 11</fullName>
        <shortName>SAM domain-containing protein 11</shortName>
    </recommendedName>
</protein>
<comment type="function">
    <text evidence="1">Component of a Polycomb group (PcG) multiprotein PRC1-like complex, essential for establishing rod photoreceptor cell identity and function by silencing nonrod gene expression in developing rod photoreceptor cells.</text>
</comment>
<comment type="subunit">
    <text evidence="1">Self-associates. Component of a Polycomb group (PcG) multiprotein PRC1-like complex. Interacts with SAMD7 and PHC2.</text>
</comment>
<comment type="interaction">
    <interactant intactId="EBI-14067109">
        <id>Q96NU1</id>
    </interactant>
    <interactant intactId="EBI-953896">
        <id>Q9NP55</id>
        <label>BPIFA1</label>
    </interactant>
    <organismsDiffer>false</organismsDiffer>
    <experiments>3</experiments>
</comment>
<comment type="interaction">
    <interactant intactId="EBI-14067109">
        <id>Q96NU1</id>
    </interactant>
    <interactant intactId="EBI-10175300">
        <id>Q8TD31-3</id>
        <label>CCHCR1</label>
    </interactant>
    <organismsDiffer>false</organismsDiffer>
    <experiments>3</experiments>
</comment>
<comment type="interaction">
    <interactant intactId="EBI-14067109">
        <id>Q96NU1</id>
    </interactant>
    <interactant intactId="EBI-6873363">
        <id>Q8WUE5</id>
        <label>CT55</label>
    </interactant>
    <organismsDiffer>false</organismsDiffer>
    <experiments>3</experiments>
</comment>
<comment type="interaction">
    <interactant intactId="EBI-14067109">
        <id>Q96NU1</id>
    </interactant>
    <interactant intactId="EBI-947964">
        <id>Q16610</id>
        <label>ECM1</label>
    </interactant>
    <organismsDiffer>false</organismsDiffer>
    <experiments>3</experiments>
</comment>
<comment type="interaction">
    <interactant intactId="EBI-14067109">
        <id>Q96NU1</id>
    </interactant>
    <interactant intactId="EBI-9090173">
        <id>P0C870</id>
        <label>JMJD7</label>
    </interactant>
    <organismsDiffer>false</organismsDiffer>
    <experiments>3</experiments>
</comment>
<comment type="interaction">
    <interactant intactId="EBI-14067109">
        <id>Q96NU1</id>
    </interactant>
    <interactant intactId="EBI-948001">
        <id>Q15323</id>
        <label>KRT31</label>
    </interactant>
    <organismsDiffer>false</organismsDiffer>
    <experiments>3</experiments>
</comment>
<comment type="interaction">
    <interactant intactId="EBI-14067109">
        <id>Q96NU1</id>
    </interactant>
    <interactant intactId="EBI-1047093">
        <id>O76011</id>
        <label>KRT34</label>
    </interactant>
    <organismsDiffer>false</organismsDiffer>
    <experiments>3</experiments>
</comment>
<comment type="interaction">
    <interactant intactId="EBI-14067109">
        <id>Q96NU1</id>
    </interactant>
    <interactant intactId="EBI-11987425">
        <id>Q6L8G8</id>
        <label>KRTAP5-7</label>
    </interactant>
    <organismsDiffer>false</organismsDiffer>
    <experiments>3</experiments>
</comment>
<comment type="interaction">
    <interactant intactId="EBI-14067109">
        <id>Q96NU1</id>
    </interactant>
    <interactant intactId="EBI-10271199">
        <id>Q8NI38</id>
        <label>NFKBID</label>
    </interactant>
    <organismsDiffer>false</organismsDiffer>
    <experiments>3</experiments>
</comment>
<comment type="interaction">
    <interactant intactId="EBI-14067109">
        <id>Q96NU1</id>
    </interactant>
    <interactant intactId="EBI-2876622">
        <id>Q9UPG8</id>
        <label>PLAGL2</label>
    </interactant>
    <organismsDiffer>false</organismsDiffer>
    <experiments>3</experiments>
</comment>
<comment type="interaction">
    <interactant intactId="EBI-14067109">
        <id>Q96NU1</id>
    </interactant>
    <interactant intactId="EBI-742388">
        <id>Q9H8W4</id>
        <label>PLEKHF2</label>
    </interactant>
    <organismsDiffer>false</organismsDiffer>
    <experiments>3</experiments>
</comment>
<comment type="interaction">
    <interactant intactId="EBI-14067109">
        <id>Q96NU1</id>
    </interactant>
    <interactant intactId="EBI-12754095">
        <id>P86480</id>
        <label>PRR20D</label>
    </interactant>
    <organismsDiffer>false</organismsDiffer>
    <experiments>3</experiments>
</comment>
<comment type="interaction">
    <interactant intactId="EBI-14067109">
        <id>Q96NU1</id>
    </interactant>
    <interactant intactId="EBI-10829018">
        <id>Q04864-2</id>
        <label>REL</label>
    </interactant>
    <organismsDiffer>false</organismsDiffer>
    <experiments>3</experiments>
</comment>
<comment type="interaction">
    <interactant intactId="EBI-14067109">
        <id>Q96NU1</id>
    </interactant>
    <interactant intactId="EBI-10174072">
        <id>A6ZKI3</id>
        <label>RTL8C</label>
    </interactant>
    <organismsDiffer>false</organismsDiffer>
    <experiments>3</experiments>
</comment>
<comment type="interaction">
    <interactant intactId="EBI-14067109">
        <id>Q96NU1</id>
    </interactant>
    <interactant intactId="EBI-359224">
        <id>Q13077</id>
        <label>TRAF1</label>
    </interactant>
    <organismsDiffer>false</organismsDiffer>
    <experiments>3</experiments>
</comment>
<comment type="interaction">
    <interactant intactId="EBI-14067109">
        <id>Q96NU1</id>
    </interactant>
    <interactant intactId="EBI-355744">
        <id>Q12933</id>
        <label>TRAF2</label>
    </interactant>
    <organismsDiffer>false</organismsDiffer>
    <experiments>3</experiments>
</comment>
<comment type="interaction">
    <interactant intactId="EBI-14067109">
        <id>Q96NU1</id>
    </interactant>
    <interactant intactId="EBI-492476">
        <id>Q96RU7</id>
        <label>TRIB3</label>
    </interactant>
    <organismsDiffer>false</organismsDiffer>
    <experiments>3</experiments>
</comment>
<comment type="interaction">
    <interactant intactId="EBI-14067109">
        <id>Q96NU1</id>
    </interactant>
    <interactant intactId="EBI-12806590">
        <id>Q86WV8</id>
        <label>TSC1</label>
    </interactant>
    <organismsDiffer>false</organismsDiffer>
    <experiments>3</experiments>
</comment>
<comment type="interaction">
    <interactant intactId="EBI-14067109">
        <id>Q96NU1</id>
    </interactant>
    <interactant intactId="EBI-12030590">
        <id>Q9H0C1</id>
        <label>ZMYND12</label>
    </interactant>
    <organismsDiffer>false</organismsDiffer>
    <experiments>3</experiments>
</comment>
<comment type="subcellular location">
    <subcellularLocation>
        <location evidence="1">Nucleus</location>
    </subcellularLocation>
</comment>
<comment type="alternative products">
    <event type="alternative promoter"/>
    <event type="alternative splicing"/>
    <isoform>
        <id>Q96NU1-3</id>
        <name>3</name>
        <name>FL-SAMD11</name>
        <sequence type="displayed"/>
    </isoform>
    <isoform>
        <id>Q96NU1-1</id>
        <name>1</name>
        <name>SAMD11-ASV</name>
        <sequence type="described" ref="VSP_053647 VSP_053649"/>
    </isoform>
    <isoform>
        <id>Q96NU1-2</id>
        <name>2</name>
        <name>AP-SAMD11-ASV</name>
        <sequence type="described" ref="VSP_053647 VSP_053650"/>
    </isoform>
    <isoform>
        <id>Q96NU1-4</id>
        <name>4</name>
        <name>SAMD11-ASV5</name>
        <sequence type="described" ref="VSP_053648 VSP_053649"/>
    </isoform>
    <isoform>
        <id>Q96NU1-5</id>
        <name>5</name>
        <name>SAMD11-ASV1</name>
        <sequence type="described" ref="VSP_053648 VSP_053649 VSP_053650"/>
    </isoform>
    <isoform>
        <id>Q96NU1-6</id>
        <name>6</name>
        <name>SAMD11-ASV6</name>
        <sequence type="described" ref="VSP_053649"/>
    </isoform>
    <text>Many additional isoforms seem to exist.</text>
</comment>
<comment type="tissue specificity">
    <text evidence="4">Expressed in the outer and inner nuclear layers, ganglion cell layer and rod photoreceptors of the retina (at protein level) (PubMed:27734943). Widely expressed, showing the highest expression in kidney, prostate and retina (PubMed:27734943).</text>
</comment>
<comment type="disease" evidence="4">
    <disease id="DI-00969">
        <name>Retinitis pigmentosa</name>
        <acronym>RP</acronym>
        <description>A retinal dystrophy belonging to the group of pigmentary retinopathies. Retinitis pigmentosa is characterized by retinal pigment deposits visible on fundus examination and primary loss of rod photoreceptor cells followed by secondary loss of cone photoreceptors. Patients typically have night vision blindness and loss of midperipheral visual field. As their condition progresses, they lose their far peripheral visual field and eventually central vision as well. Retinitis pigmentosa can be inherited as an autosomal dominant, autosomal recessive or X-linked condition.</description>
        <dbReference type="MIM" id="268000"/>
    </disease>
    <text>Disease susceptibility may be associated with variants affecting the gene represented in this entry.</text>
</comment>
<comment type="miscellaneous">
    <molecule>Isoform 1</molecule>
    <text evidence="8">Produced by alternative promoter usage.</text>
</comment>
<comment type="miscellaneous">
    <molecule>Isoform 2</molecule>
    <text evidence="8">Produced by alternative promoter usage and alternative splicing.</text>
</comment>
<comment type="miscellaneous">
    <molecule>Isoform 4</molecule>
    <text evidence="8">Produced by alternative splicing.</text>
</comment>
<comment type="miscellaneous">
    <molecule>Isoform 5</molecule>
    <text evidence="8">Produced by alternative splicing.</text>
</comment>
<comment type="miscellaneous">
    <molecule>Isoform 6</molecule>
    <text evidence="8">Produced by alternative splicing.</text>
</comment>
<comment type="sequence caution" evidence="8">
    <conflict type="erroneous initiation">
        <sequence resource="EMBL-CDS" id="BAB70781"/>
    </conflict>
    <text>Truncated N-terminus.</text>
</comment>
<dbReference type="EMBL" id="JX093066">
    <property type="protein sequence ID" value="AFP36417.1"/>
    <property type="molecule type" value="mRNA"/>
</dbReference>
<dbReference type="EMBL" id="JX093070">
    <property type="protein sequence ID" value="AFP36421.1"/>
    <property type="molecule type" value="mRNA"/>
</dbReference>
<dbReference type="EMBL" id="JX093071">
    <property type="protein sequence ID" value="AFP36422.1"/>
    <property type="molecule type" value="mRNA"/>
</dbReference>
<dbReference type="EMBL" id="AK054643">
    <property type="protein sequence ID" value="BAB70781.1"/>
    <property type="status" value="ALT_INIT"/>
    <property type="molecule type" value="mRNA"/>
</dbReference>
<dbReference type="EMBL" id="AL645608">
    <property type="status" value="NOT_ANNOTATED_CDS"/>
    <property type="molecule type" value="Genomic_DNA"/>
</dbReference>
<dbReference type="EMBL" id="BC024295">
    <property type="protein sequence ID" value="AAH24295.1"/>
    <property type="molecule type" value="mRNA"/>
</dbReference>
<dbReference type="EMBL" id="BC033213">
    <property type="protein sequence ID" value="AAH33213.1"/>
    <property type="molecule type" value="mRNA"/>
</dbReference>
<dbReference type="CCDS" id="CCDS2.2">
    <molecule id="Q96NU1-3"/>
</dbReference>
<dbReference type="RefSeq" id="NP_689699.3">
    <molecule id="Q96NU1-3"/>
    <property type="nucleotide sequence ID" value="NM_152486.4"/>
</dbReference>
<dbReference type="SMR" id="Q96NU1"/>
<dbReference type="BioGRID" id="127146">
    <property type="interactions" value="41"/>
</dbReference>
<dbReference type="FunCoup" id="Q96NU1">
    <property type="interactions" value="194"/>
</dbReference>
<dbReference type="IntAct" id="Q96NU1">
    <property type="interactions" value="38"/>
</dbReference>
<dbReference type="MINT" id="Q96NU1"/>
<dbReference type="STRING" id="9606.ENSP00000342313"/>
<dbReference type="GlyGen" id="Q96NU1">
    <property type="glycosylation" value="3 sites"/>
</dbReference>
<dbReference type="iPTMnet" id="Q96NU1"/>
<dbReference type="PhosphoSitePlus" id="Q96NU1"/>
<dbReference type="SwissPalm" id="Q96NU1"/>
<dbReference type="BioMuta" id="SAMD11"/>
<dbReference type="DMDM" id="166215037"/>
<dbReference type="jPOST" id="Q96NU1"/>
<dbReference type="MassIVE" id="Q96NU1"/>
<dbReference type="PaxDb" id="9606-ENSP00000342313"/>
<dbReference type="PeptideAtlas" id="Q96NU1"/>
<dbReference type="ProteomicsDB" id="77562">
    <molecule id="Q96NU1-3"/>
</dbReference>
<dbReference type="ProteomicsDB" id="77563">
    <molecule id="Q96NU1-1"/>
</dbReference>
<dbReference type="ProteomicsDB" id="77564">
    <molecule id="Q96NU1-2"/>
</dbReference>
<dbReference type="Pumba" id="Q96NU1"/>
<dbReference type="Antibodypedia" id="56168">
    <property type="antibodies" value="12 antibodies from 8 providers"/>
</dbReference>
<dbReference type="DNASU" id="148398"/>
<dbReference type="Ensembl" id="ENST00000342066.8">
    <molecule id="Q96NU1-3"/>
    <property type="protein sequence ID" value="ENSP00000342313.3"/>
    <property type="gene ID" value="ENSG00000187634.13"/>
</dbReference>
<dbReference type="GeneID" id="148398"/>
<dbReference type="KEGG" id="hsa:148398"/>
<dbReference type="UCSC" id="uc001abw.2">
    <molecule id="Q96NU1-3"/>
    <property type="organism name" value="human"/>
</dbReference>
<dbReference type="AGR" id="HGNC:28706"/>
<dbReference type="CTD" id="148398"/>
<dbReference type="DisGeNET" id="148398"/>
<dbReference type="GeneCards" id="SAMD11"/>
<dbReference type="HGNC" id="HGNC:28706">
    <property type="gene designation" value="SAMD11"/>
</dbReference>
<dbReference type="HPA" id="ENSG00000187634">
    <property type="expression patterns" value="Low tissue specificity"/>
</dbReference>
<dbReference type="MalaCards" id="SAMD11"/>
<dbReference type="MIM" id="268000">
    <property type="type" value="phenotype"/>
</dbReference>
<dbReference type="neXtProt" id="NX_Q96NU1"/>
<dbReference type="OpenTargets" id="ENSG00000187634"/>
<dbReference type="PharmGKB" id="PA134968665"/>
<dbReference type="VEuPathDB" id="HostDB:ENSG00000187634"/>
<dbReference type="eggNOG" id="KOG4333">
    <property type="taxonomic scope" value="Eukaryota"/>
</dbReference>
<dbReference type="GeneTree" id="ENSGT00940000160830"/>
<dbReference type="InParanoid" id="Q96NU1"/>
<dbReference type="OMA" id="ISPYFHT"/>
<dbReference type="OrthoDB" id="6433810at2759"/>
<dbReference type="PAN-GO" id="Q96NU1">
    <property type="GO annotations" value="4 GO annotations based on evolutionary models"/>
</dbReference>
<dbReference type="PhylomeDB" id="Q96NU1"/>
<dbReference type="TreeFam" id="TF331299"/>
<dbReference type="PathwayCommons" id="Q96NU1"/>
<dbReference type="SignaLink" id="Q96NU1"/>
<dbReference type="BioGRID-ORCS" id="148398">
    <property type="hits" value="12 hits in 1151 CRISPR screens"/>
</dbReference>
<dbReference type="ChiTaRS" id="SAMD11">
    <property type="organism name" value="human"/>
</dbReference>
<dbReference type="GenomeRNAi" id="148398"/>
<dbReference type="Pharos" id="Q96NU1">
    <property type="development level" value="Tdark"/>
</dbReference>
<dbReference type="PRO" id="PR:Q96NU1"/>
<dbReference type="Proteomes" id="UP000005640">
    <property type="component" value="Chromosome 1"/>
</dbReference>
<dbReference type="RNAct" id="Q96NU1">
    <property type="molecule type" value="protein"/>
</dbReference>
<dbReference type="Bgee" id="ENSG00000187634">
    <property type="expression patterns" value="Expressed in left uterine tube and 110 other cell types or tissues"/>
</dbReference>
<dbReference type="ExpressionAtlas" id="Q96NU1">
    <property type="expression patterns" value="baseline and differential"/>
</dbReference>
<dbReference type="GO" id="GO:0005634">
    <property type="term" value="C:nucleus"/>
    <property type="evidence" value="ECO:0000318"/>
    <property type="project" value="GO_Central"/>
</dbReference>
<dbReference type="GO" id="GO:0035102">
    <property type="term" value="C:PRC1 complex"/>
    <property type="evidence" value="ECO:0000250"/>
    <property type="project" value="UniProtKB"/>
</dbReference>
<dbReference type="GO" id="GO:0003682">
    <property type="term" value="F:chromatin binding"/>
    <property type="evidence" value="ECO:0000318"/>
    <property type="project" value="GO_Central"/>
</dbReference>
<dbReference type="GO" id="GO:0001227">
    <property type="term" value="F:DNA-binding transcription repressor activity, RNA polymerase II-specific"/>
    <property type="evidence" value="ECO:0000250"/>
    <property type="project" value="UniProtKB"/>
</dbReference>
<dbReference type="GO" id="GO:0042393">
    <property type="term" value="F:histone binding"/>
    <property type="evidence" value="ECO:0000318"/>
    <property type="project" value="GO_Central"/>
</dbReference>
<dbReference type="GO" id="GO:0045892">
    <property type="term" value="P:negative regulation of DNA-templated transcription"/>
    <property type="evidence" value="ECO:0000318"/>
    <property type="project" value="GO_Central"/>
</dbReference>
<dbReference type="GO" id="GO:0046548">
    <property type="term" value="P:retinal rod cell development"/>
    <property type="evidence" value="ECO:0000250"/>
    <property type="project" value="UniProtKB"/>
</dbReference>
<dbReference type="CDD" id="cd09579">
    <property type="entry name" value="SAM_Samd7_11"/>
    <property type="match status" value="1"/>
</dbReference>
<dbReference type="Gene3D" id="1.10.150.50">
    <property type="entry name" value="Transcription Factor, Ets-1"/>
    <property type="match status" value="1"/>
</dbReference>
<dbReference type="InterPro" id="IPR001660">
    <property type="entry name" value="SAM"/>
</dbReference>
<dbReference type="InterPro" id="IPR013761">
    <property type="entry name" value="SAM/pointed_sf"/>
</dbReference>
<dbReference type="PANTHER" id="PTHR10417">
    <property type="entry name" value="GLUCOCORTICOID MODULATORY ELEMENT-BINDING PROTEIN"/>
    <property type="match status" value="1"/>
</dbReference>
<dbReference type="PANTHER" id="PTHR10417:SF15">
    <property type="entry name" value="STERILE ALPHA MOTIF DOMAIN-CONTAINING 11"/>
    <property type="match status" value="1"/>
</dbReference>
<dbReference type="Pfam" id="PF07647">
    <property type="entry name" value="SAM_2"/>
    <property type="match status" value="1"/>
</dbReference>
<dbReference type="SMART" id="SM00454">
    <property type="entry name" value="SAM"/>
    <property type="match status" value="1"/>
</dbReference>
<dbReference type="SUPFAM" id="SSF47769">
    <property type="entry name" value="SAM/Pointed domain"/>
    <property type="match status" value="1"/>
</dbReference>
<dbReference type="PROSITE" id="PS50105">
    <property type="entry name" value="SAM_DOMAIN"/>
    <property type="match status" value="1"/>
</dbReference>
<accession>Q96NU1</accession>
<accession>A2AA76</accession>
<accession>I7FV78</accession>
<accession>I7FV81</accession>
<accession>I7G0Z6</accession>
<accession>Q5SV96</accession>
<accession>Q5SV99</accession>
<accession>Q5SVA0</accession>
<accession>Q8N195</accession>
<accession>Q8TB59</accession>
<reference key="1">
    <citation type="journal article" date="2013" name="Gene">
        <title>Identification and characterization of novel alternative splice variants of human SAMD11.</title>
        <authorList>
            <person name="Jin G."/>
            <person name="Long C."/>
            <person name="Liu W."/>
            <person name="Tang Y."/>
            <person name="Zhu Y."/>
            <person name="Zhou X."/>
            <person name="Ai Y."/>
            <person name="Zhang Q."/>
            <person name="Shen H."/>
        </authorList>
    </citation>
    <scope>NUCLEOTIDE SEQUENCE [MRNA] (ISOFORMS 4; 5 AND 6)</scope>
    <scope>ALTERNATIVE SPLICING</scope>
    <scope>ALTERNATIVE PROMOTER USAGE</scope>
</reference>
<reference key="2">
    <citation type="journal article" date="2004" name="Nat. Genet.">
        <title>Complete sequencing and characterization of 21,243 full-length human cDNAs.</title>
        <authorList>
            <person name="Ota T."/>
            <person name="Suzuki Y."/>
            <person name="Nishikawa T."/>
            <person name="Otsuki T."/>
            <person name="Sugiyama T."/>
            <person name="Irie R."/>
            <person name="Wakamatsu A."/>
            <person name="Hayashi K."/>
            <person name="Sato H."/>
            <person name="Nagai K."/>
            <person name="Kimura K."/>
            <person name="Makita H."/>
            <person name="Sekine M."/>
            <person name="Obayashi M."/>
            <person name="Nishi T."/>
            <person name="Shibahara T."/>
            <person name="Tanaka T."/>
            <person name="Ishii S."/>
            <person name="Yamamoto J."/>
            <person name="Saito K."/>
            <person name="Kawai Y."/>
            <person name="Isono Y."/>
            <person name="Nakamura Y."/>
            <person name="Nagahari K."/>
            <person name="Murakami K."/>
            <person name="Yasuda T."/>
            <person name="Iwayanagi T."/>
            <person name="Wagatsuma M."/>
            <person name="Shiratori A."/>
            <person name="Sudo H."/>
            <person name="Hosoiri T."/>
            <person name="Kaku Y."/>
            <person name="Kodaira H."/>
            <person name="Kondo H."/>
            <person name="Sugawara M."/>
            <person name="Takahashi M."/>
            <person name="Kanda K."/>
            <person name="Yokoi T."/>
            <person name="Furuya T."/>
            <person name="Kikkawa E."/>
            <person name="Omura Y."/>
            <person name="Abe K."/>
            <person name="Kamihara K."/>
            <person name="Katsuta N."/>
            <person name="Sato K."/>
            <person name="Tanikawa M."/>
            <person name="Yamazaki M."/>
            <person name="Ninomiya K."/>
            <person name="Ishibashi T."/>
            <person name="Yamashita H."/>
            <person name="Murakawa K."/>
            <person name="Fujimori K."/>
            <person name="Tanai H."/>
            <person name="Kimata M."/>
            <person name="Watanabe M."/>
            <person name="Hiraoka S."/>
            <person name="Chiba Y."/>
            <person name="Ishida S."/>
            <person name="Ono Y."/>
            <person name="Takiguchi S."/>
            <person name="Watanabe S."/>
            <person name="Yosida M."/>
            <person name="Hotuta T."/>
            <person name="Kusano J."/>
            <person name="Kanehori K."/>
            <person name="Takahashi-Fujii A."/>
            <person name="Hara H."/>
            <person name="Tanase T.-O."/>
            <person name="Nomura Y."/>
            <person name="Togiya S."/>
            <person name="Komai F."/>
            <person name="Hara R."/>
            <person name="Takeuchi K."/>
            <person name="Arita M."/>
            <person name="Imose N."/>
            <person name="Musashino K."/>
            <person name="Yuuki H."/>
            <person name="Oshima A."/>
            <person name="Sasaki N."/>
            <person name="Aotsuka S."/>
            <person name="Yoshikawa Y."/>
            <person name="Matsunawa H."/>
            <person name="Ichihara T."/>
            <person name="Shiohata N."/>
            <person name="Sano S."/>
            <person name="Moriya S."/>
            <person name="Momiyama H."/>
            <person name="Satoh N."/>
            <person name="Takami S."/>
            <person name="Terashima Y."/>
            <person name="Suzuki O."/>
            <person name="Nakagawa S."/>
            <person name="Senoh A."/>
            <person name="Mizoguchi H."/>
            <person name="Goto Y."/>
            <person name="Shimizu F."/>
            <person name="Wakebe H."/>
            <person name="Hishigaki H."/>
            <person name="Watanabe T."/>
            <person name="Sugiyama A."/>
            <person name="Takemoto M."/>
            <person name="Kawakami B."/>
            <person name="Yamazaki M."/>
            <person name="Watanabe K."/>
            <person name="Kumagai A."/>
            <person name="Itakura S."/>
            <person name="Fukuzumi Y."/>
            <person name="Fujimori Y."/>
            <person name="Komiyama M."/>
            <person name="Tashiro H."/>
            <person name="Tanigami A."/>
            <person name="Fujiwara T."/>
            <person name="Ono T."/>
            <person name="Yamada K."/>
            <person name="Fujii Y."/>
            <person name="Ozaki K."/>
            <person name="Hirao M."/>
            <person name="Ohmori Y."/>
            <person name="Kawabata A."/>
            <person name="Hikiji T."/>
            <person name="Kobatake N."/>
            <person name="Inagaki H."/>
            <person name="Ikema Y."/>
            <person name="Okamoto S."/>
            <person name="Okitani R."/>
            <person name="Kawakami T."/>
            <person name="Noguchi S."/>
            <person name="Itoh T."/>
            <person name="Shigeta K."/>
            <person name="Senba T."/>
            <person name="Matsumura K."/>
            <person name="Nakajima Y."/>
            <person name="Mizuno T."/>
            <person name="Morinaga M."/>
            <person name="Sasaki M."/>
            <person name="Togashi T."/>
            <person name="Oyama M."/>
            <person name="Hata H."/>
            <person name="Watanabe M."/>
            <person name="Komatsu T."/>
            <person name="Mizushima-Sugano J."/>
            <person name="Satoh T."/>
            <person name="Shirai Y."/>
            <person name="Takahashi Y."/>
            <person name="Nakagawa K."/>
            <person name="Okumura K."/>
            <person name="Nagase T."/>
            <person name="Nomura N."/>
            <person name="Kikuchi H."/>
            <person name="Masuho Y."/>
            <person name="Yamashita R."/>
            <person name="Nakai K."/>
            <person name="Yada T."/>
            <person name="Nakamura Y."/>
            <person name="Ohara O."/>
            <person name="Isogai T."/>
            <person name="Sugano S."/>
        </authorList>
    </citation>
    <scope>NUCLEOTIDE SEQUENCE [LARGE SCALE MRNA] (ISOFORM 2)</scope>
</reference>
<reference key="3">
    <citation type="journal article" date="2006" name="Nature">
        <title>The DNA sequence and biological annotation of human chromosome 1.</title>
        <authorList>
            <person name="Gregory S.G."/>
            <person name="Barlow K.F."/>
            <person name="McLay K.E."/>
            <person name="Kaul R."/>
            <person name="Swarbreck D."/>
            <person name="Dunham A."/>
            <person name="Scott C.E."/>
            <person name="Howe K.L."/>
            <person name="Woodfine K."/>
            <person name="Spencer C.C.A."/>
            <person name="Jones M.C."/>
            <person name="Gillson C."/>
            <person name="Searle S."/>
            <person name="Zhou Y."/>
            <person name="Kokocinski F."/>
            <person name="McDonald L."/>
            <person name="Evans R."/>
            <person name="Phillips K."/>
            <person name="Atkinson A."/>
            <person name="Cooper R."/>
            <person name="Jones C."/>
            <person name="Hall R.E."/>
            <person name="Andrews T.D."/>
            <person name="Lloyd C."/>
            <person name="Ainscough R."/>
            <person name="Almeida J.P."/>
            <person name="Ambrose K.D."/>
            <person name="Anderson F."/>
            <person name="Andrew R.W."/>
            <person name="Ashwell R.I.S."/>
            <person name="Aubin K."/>
            <person name="Babbage A.K."/>
            <person name="Bagguley C.L."/>
            <person name="Bailey J."/>
            <person name="Beasley H."/>
            <person name="Bethel G."/>
            <person name="Bird C.P."/>
            <person name="Bray-Allen S."/>
            <person name="Brown J.Y."/>
            <person name="Brown A.J."/>
            <person name="Buckley D."/>
            <person name="Burton J."/>
            <person name="Bye J."/>
            <person name="Carder C."/>
            <person name="Chapman J.C."/>
            <person name="Clark S.Y."/>
            <person name="Clarke G."/>
            <person name="Clee C."/>
            <person name="Cobley V."/>
            <person name="Collier R.E."/>
            <person name="Corby N."/>
            <person name="Coville G.J."/>
            <person name="Davies J."/>
            <person name="Deadman R."/>
            <person name="Dunn M."/>
            <person name="Earthrowl M."/>
            <person name="Ellington A.G."/>
            <person name="Errington H."/>
            <person name="Frankish A."/>
            <person name="Frankland J."/>
            <person name="French L."/>
            <person name="Garner P."/>
            <person name="Garnett J."/>
            <person name="Gay L."/>
            <person name="Ghori M.R.J."/>
            <person name="Gibson R."/>
            <person name="Gilby L.M."/>
            <person name="Gillett W."/>
            <person name="Glithero R.J."/>
            <person name="Grafham D.V."/>
            <person name="Griffiths C."/>
            <person name="Griffiths-Jones S."/>
            <person name="Grocock R."/>
            <person name="Hammond S."/>
            <person name="Harrison E.S.I."/>
            <person name="Hart E."/>
            <person name="Haugen E."/>
            <person name="Heath P.D."/>
            <person name="Holmes S."/>
            <person name="Holt K."/>
            <person name="Howden P.J."/>
            <person name="Hunt A.R."/>
            <person name="Hunt S.E."/>
            <person name="Hunter G."/>
            <person name="Isherwood J."/>
            <person name="James R."/>
            <person name="Johnson C."/>
            <person name="Johnson D."/>
            <person name="Joy A."/>
            <person name="Kay M."/>
            <person name="Kershaw J.K."/>
            <person name="Kibukawa M."/>
            <person name="Kimberley A.M."/>
            <person name="King A."/>
            <person name="Knights A.J."/>
            <person name="Lad H."/>
            <person name="Laird G."/>
            <person name="Lawlor S."/>
            <person name="Leongamornlert D.A."/>
            <person name="Lloyd D.M."/>
            <person name="Loveland J."/>
            <person name="Lovell J."/>
            <person name="Lush M.J."/>
            <person name="Lyne R."/>
            <person name="Martin S."/>
            <person name="Mashreghi-Mohammadi M."/>
            <person name="Matthews L."/>
            <person name="Matthews N.S.W."/>
            <person name="McLaren S."/>
            <person name="Milne S."/>
            <person name="Mistry S."/>
            <person name="Moore M.J.F."/>
            <person name="Nickerson T."/>
            <person name="O'Dell C.N."/>
            <person name="Oliver K."/>
            <person name="Palmeiri A."/>
            <person name="Palmer S.A."/>
            <person name="Parker A."/>
            <person name="Patel D."/>
            <person name="Pearce A.V."/>
            <person name="Peck A.I."/>
            <person name="Pelan S."/>
            <person name="Phelps K."/>
            <person name="Phillimore B.J."/>
            <person name="Plumb R."/>
            <person name="Rajan J."/>
            <person name="Raymond C."/>
            <person name="Rouse G."/>
            <person name="Saenphimmachak C."/>
            <person name="Sehra H.K."/>
            <person name="Sheridan E."/>
            <person name="Shownkeen R."/>
            <person name="Sims S."/>
            <person name="Skuce C.D."/>
            <person name="Smith M."/>
            <person name="Steward C."/>
            <person name="Subramanian S."/>
            <person name="Sycamore N."/>
            <person name="Tracey A."/>
            <person name="Tromans A."/>
            <person name="Van Helmond Z."/>
            <person name="Wall M."/>
            <person name="Wallis J.M."/>
            <person name="White S."/>
            <person name="Whitehead S.L."/>
            <person name="Wilkinson J.E."/>
            <person name="Willey D.L."/>
            <person name="Williams H."/>
            <person name="Wilming L."/>
            <person name="Wray P.W."/>
            <person name="Wu Z."/>
            <person name="Coulson A."/>
            <person name="Vaudin M."/>
            <person name="Sulston J.E."/>
            <person name="Durbin R.M."/>
            <person name="Hubbard T."/>
            <person name="Wooster R."/>
            <person name="Dunham I."/>
            <person name="Carter N.P."/>
            <person name="McVean G."/>
            <person name="Ross M.T."/>
            <person name="Harrow J."/>
            <person name="Olson M.V."/>
            <person name="Beck S."/>
            <person name="Rogers J."/>
            <person name="Bentley D.R."/>
        </authorList>
    </citation>
    <scope>NUCLEOTIDE SEQUENCE [LARGE SCALE GENOMIC DNA]</scope>
</reference>
<reference key="4">
    <citation type="journal article" date="2004" name="Genome Res.">
        <title>The status, quality, and expansion of the NIH full-length cDNA project: the Mammalian Gene Collection (MGC).</title>
        <authorList>
            <consortium name="The MGC Project Team"/>
        </authorList>
    </citation>
    <scope>NUCLEOTIDE SEQUENCE [LARGE SCALE MRNA] (ISOFORMS 1 AND 2)</scope>
    <source>
        <tissue>Brain</tissue>
        <tissue>Eye</tissue>
    </source>
</reference>
<reference key="5">
    <citation type="journal article" date="2013" name="J. Proteome Res.">
        <title>Toward a comprehensive characterization of a human cancer cell phosphoproteome.</title>
        <authorList>
            <person name="Zhou H."/>
            <person name="Di Palma S."/>
            <person name="Preisinger C."/>
            <person name="Peng M."/>
            <person name="Polat A.N."/>
            <person name="Heck A.J."/>
            <person name="Mohammed S."/>
        </authorList>
    </citation>
    <scope>PHOSPHORYLATION [LARGE SCALE ANALYSIS] AT THR-485 AND SER-640</scope>
    <scope>IDENTIFICATION BY MASS SPECTROMETRY [LARGE SCALE ANALYSIS]</scope>
    <source>
        <tissue>Cervix carcinoma</tissue>
    </source>
</reference>
<reference key="6">
    <citation type="journal article" date="2017" name="Nat. Struct. Mol. Biol.">
        <title>Site-specific mapping of the human SUMO proteome reveals co-modification with phosphorylation.</title>
        <authorList>
            <person name="Hendriks I.A."/>
            <person name="Lyon D."/>
            <person name="Young C."/>
            <person name="Jensen L.J."/>
            <person name="Vertegaal A.C."/>
            <person name="Nielsen M.L."/>
        </authorList>
    </citation>
    <scope>SUMOYLATION [LARGE SCALE ANALYSIS] AT LYS-72</scope>
    <scope>IDENTIFICATION BY MASS SPECTROMETRY [LARGE SCALE ANALYSIS]</scope>
</reference>
<reference key="7">
    <citation type="journal article" date="2016" name="Sci. Rep.">
        <title>Identification of the Photoreceptor Transcriptional Co-Repressor SAMD11 as Novel Cause of Autosomal Recessive Retinitis Pigmentosa.</title>
        <authorList>
            <person name="Corton M."/>
            <person name="Avila-Fernandez A."/>
            <person name="Campello L."/>
            <person name="Sanchez M."/>
            <person name="Benavides B."/>
            <person name="Lopez-Molina M.I."/>
            <person name="Fernandez-Sanchez L."/>
            <person name="Sanchez-Alcudia R."/>
            <person name="da Silva L.R.J."/>
            <person name="Reyes N."/>
            <person name="Martin-Garrido E."/>
            <person name="Zurita O."/>
            <person name="Fernandez-San Jose P."/>
            <person name="Perez-Carro R."/>
            <person name="Garcia-Garcia F."/>
            <person name="Dopazo J."/>
            <person name="Garcia-Sandoval B."/>
            <person name="Cuenca N."/>
            <person name="Ayuso C."/>
        </authorList>
    </citation>
    <scope>VARIANTS RP GLU-45; 168-ARG--CYS-681 DEL AND 630-ARG--CYS-681 DEL</scope>
    <scope>INVOLVEMENT IN RP</scope>
    <scope>TISSUE SPECIFICITY</scope>
</reference>
<keyword id="KW-0877">Alternative promoter usage</keyword>
<keyword id="KW-0025">Alternative splicing</keyword>
<keyword id="KW-0225">Disease variant</keyword>
<keyword id="KW-1017">Isopeptide bond</keyword>
<keyword id="KW-0539">Nucleus</keyword>
<keyword id="KW-0597">Phosphoprotein</keyword>
<keyword id="KW-1267">Proteomics identification</keyword>
<keyword id="KW-1185">Reference proteome</keyword>
<keyword id="KW-0678">Repressor</keyword>
<keyword id="KW-0682">Retinitis pigmentosa</keyword>
<keyword id="KW-0804">Transcription</keyword>
<keyword id="KW-0805">Transcription regulation</keyword>
<keyword id="KW-0832">Ubl conjugation</keyword>
<name>SAM11_HUMAN</name>
<sequence>MSKGILQVHPPICDCPGCRISSPVNRGRLADKRTVALPAARNLKKERTPSFSASDGDSDGSGPTCGRRPGLKQEDGPHIRIMKRRVHTHWDVNISFREASCSQDGNLPTLISSVHRSRHLVMPEHQSRCEFQRGSLEIGLRPAGDLLGKRLGRSPRISSDCFSEKRARSESPQEALLLPRELGPSMAPEDHYRRLVSALSEASTFEDPQRLYHLGLPSHGEDPPWHDPPHHLPSHDLLRVRQEVAAAALRGPSGLEAHLPSSTAGQRRKQGLAQHREGAAPAAAPSFSERELPQPPPLLSPQNAPHVALGPHLRPPFLGVPSALCQTPGYGFLPPAQAEMFAWQQELLRKQNLARLELPADLLRQKELESARPQLLAPETALRPNDGAEELQRRGALLVLNHGAAPLLALPPQGPPGSGPPTPSRDSARRAPRKGGPGPASARPSESKEMTGARLWAQDGSEDEPPKDSDGEDPETAAVGCRGPTPGQAPAGGAGAEGKGLFPGSTLPLGFPYAVSPYFHTGAVGGLSMDGEEAPAPEDVTKWTVDDVCSFVGGLSGCGEYTRVFREQGIDGETLPLLTEEHLLTNMGLKLGPALKIRAQVARRLGRVFYVASFPVALPLQPPTLRAPERELGTGEQPLSPTTATSPYGGGHALAGQTSPKQENGTLALLPGAPDPSQPLC</sequence>
<gene>
    <name type="primary">SAMD11</name>
</gene>
<organism>
    <name type="scientific">Homo sapiens</name>
    <name type="common">Human</name>
    <dbReference type="NCBI Taxonomy" id="9606"/>
    <lineage>
        <taxon>Eukaryota</taxon>
        <taxon>Metazoa</taxon>
        <taxon>Chordata</taxon>
        <taxon>Craniata</taxon>
        <taxon>Vertebrata</taxon>
        <taxon>Euteleostomi</taxon>
        <taxon>Mammalia</taxon>
        <taxon>Eutheria</taxon>
        <taxon>Euarchontoglires</taxon>
        <taxon>Primates</taxon>
        <taxon>Haplorrhini</taxon>
        <taxon>Catarrhini</taxon>
        <taxon>Hominidae</taxon>
        <taxon>Homo</taxon>
    </lineage>
</organism>